<sequence length="233" mass="24276">MSNGGSFTVEKLSLYGNPNIGVYLTASDSYVLAPDDIGADDVRTISEVLGVAMERVVRLRVLGMRLVGVLTTGNSRGILLPEGVDREVELVRKALEGVEVGIVPTRSNALGNVIVCNDRACLASPGLEKEALKTVSDTLGVEVVEGSVAGVYTVGSAIVVTNRGGLAHPDASEEELKFLSDVFKVPFEAGTINFGVEFVRTGLVANSYGALVGEDTTGPEIARIQVALGGGVK</sequence>
<proteinExistence type="inferred from homology"/>
<gene>
    <name evidence="1" type="primary">eif6</name>
    <name type="ordered locus">APE_1085</name>
</gene>
<feature type="chain" id="PRO_0000153743" description="Translation initiation factor 6">
    <location>
        <begin position="1"/>
        <end position="233"/>
    </location>
</feature>
<keyword id="KW-0396">Initiation factor</keyword>
<keyword id="KW-0648">Protein biosynthesis</keyword>
<keyword id="KW-1185">Reference proteome</keyword>
<evidence type="ECO:0000255" key="1">
    <source>
        <dbReference type="HAMAP-Rule" id="MF_00032"/>
    </source>
</evidence>
<reference key="1">
    <citation type="journal article" date="1999" name="DNA Res.">
        <title>Complete genome sequence of an aerobic hyper-thermophilic crenarchaeon, Aeropyrum pernix K1.</title>
        <authorList>
            <person name="Kawarabayasi Y."/>
            <person name="Hino Y."/>
            <person name="Horikawa H."/>
            <person name="Yamazaki S."/>
            <person name="Haikawa Y."/>
            <person name="Jin-no K."/>
            <person name="Takahashi M."/>
            <person name="Sekine M."/>
            <person name="Baba S."/>
            <person name="Ankai A."/>
            <person name="Kosugi H."/>
            <person name="Hosoyama A."/>
            <person name="Fukui S."/>
            <person name="Nagai Y."/>
            <person name="Nishijima K."/>
            <person name="Nakazawa H."/>
            <person name="Takamiya M."/>
            <person name="Masuda S."/>
            <person name="Funahashi T."/>
            <person name="Tanaka T."/>
            <person name="Kudoh Y."/>
            <person name="Yamazaki J."/>
            <person name="Kushida N."/>
            <person name="Oguchi A."/>
            <person name="Aoki K."/>
            <person name="Kubota K."/>
            <person name="Nakamura Y."/>
            <person name="Nomura N."/>
            <person name="Sako Y."/>
            <person name="Kikuchi H."/>
        </authorList>
    </citation>
    <scope>NUCLEOTIDE SEQUENCE [LARGE SCALE GENOMIC DNA]</scope>
    <source>
        <strain>ATCC 700893 / DSM 11879 / JCM 9820 / NBRC 100138 / K1</strain>
    </source>
</reference>
<dbReference type="EMBL" id="BA000002">
    <property type="protein sequence ID" value="BAA80070.1"/>
    <property type="molecule type" value="Genomic_DNA"/>
</dbReference>
<dbReference type="PIR" id="F72708">
    <property type="entry name" value="F72708"/>
</dbReference>
<dbReference type="RefSeq" id="WP_010866163.1">
    <property type="nucleotide sequence ID" value="NC_000854.2"/>
</dbReference>
<dbReference type="SMR" id="Q9YD27"/>
<dbReference type="STRING" id="272557.APE_1085"/>
<dbReference type="EnsemblBacteria" id="BAA80070">
    <property type="protein sequence ID" value="BAA80070"/>
    <property type="gene ID" value="APE_1085"/>
</dbReference>
<dbReference type="GeneID" id="1445781"/>
<dbReference type="KEGG" id="ape:APE_1085"/>
<dbReference type="eggNOG" id="arCOG04176">
    <property type="taxonomic scope" value="Archaea"/>
</dbReference>
<dbReference type="Proteomes" id="UP000002518">
    <property type="component" value="Chromosome"/>
</dbReference>
<dbReference type="GO" id="GO:0043022">
    <property type="term" value="F:ribosome binding"/>
    <property type="evidence" value="ECO:0007669"/>
    <property type="project" value="InterPro"/>
</dbReference>
<dbReference type="GO" id="GO:0003743">
    <property type="term" value="F:translation initiation factor activity"/>
    <property type="evidence" value="ECO:0007669"/>
    <property type="project" value="UniProtKB-UniRule"/>
</dbReference>
<dbReference type="GO" id="GO:0042256">
    <property type="term" value="P:cytosolic ribosome assembly"/>
    <property type="evidence" value="ECO:0007669"/>
    <property type="project" value="InterPro"/>
</dbReference>
<dbReference type="CDD" id="cd00527">
    <property type="entry name" value="IF6"/>
    <property type="match status" value="1"/>
</dbReference>
<dbReference type="Gene3D" id="3.75.10.10">
    <property type="entry name" value="L-arginine/glycine Amidinotransferase, Chain A"/>
    <property type="match status" value="1"/>
</dbReference>
<dbReference type="HAMAP" id="MF_00032">
    <property type="entry name" value="eIF_6"/>
    <property type="match status" value="1"/>
</dbReference>
<dbReference type="InterPro" id="IPR002769">
    <property type="entry name" value="eIF6"/>
</dbReference>
<dbReference type="NCBIfam" id="TIGR00323">
    <property type="entry name" value="eIF-6"/>
    <property type="match status" value="1"/>
</dbReference>
<dbReference type="NCBIfam" id="NF003135">
    <property type="entry name" value="PRK04046.3-3"/>
    <property type="match status" value="1"/>
</dbReference>
<dbReference type="PANTHER" id="PTHR10784">
    <property type="entry name" value="TRANSLATION INITIATION FACTOR 6"/>
    <property type="match status" value="1"/>
</dbReference>
<dbReference type="Pfam" id="PF01912">
    <property type="entry name" value="eIF-6"/>
    <property type="match status" value="1"/>
</dbReference>
<dbReference type="PIRSF" id="PIRSF006413">
    <property type="entry name" value="IF-6"/>
    <property type="match status" value="1"/>
</dbReference>
<dbReference type="SMART" id="SM00654">
    <property type="entry name" value="eIF6"/>
    <property type="match status" value="1"/>
</dbReference>
<dbReference type="SUPFAM" id="SSF55909">
    <property type="entry name" value="Pentein"/>
    <property type="match status" value="1"/>
</dbReference>
<protein>
    <recommendedName>
        <fullName evidence="1">Translation initiation factor 6</fullName>
        <shortName evidence="1">aIF-6</shortName>
    </recommendedName>
</protein>
<organism>
    <name type="scientific">Aeropyrum pernix (strain ATCC 700893 / DSM 11879 / JCM 9820 / NBRC 100138 / K1)</name>
    <dbReference type="NCBI Taxonomy" id="272557"/>
    <lineage>
        <taxon>Archaea</taxon>
        <taxon>Thermoproteota</taxon>
        <taxon>Thermoprotei</taxon>
        <taxon>Desulfurococcales</taxon>
        <taxon>Desulfurococcaceae</taxon>
        <taxon>Aeropyrum</taxon>
    </lineage>
</organism>
<name>IF6_AERPE</name>
<accession>Q9YD27</accession>
<comment type="function">
    <text evidence="1">Binds to the 50S ribosomal subunit and prevents its association with the 30S ribosomal subunit to form the 70S initiation complex.</text>
</comment>
<comment type="similarity">
    <text evidence="1">Belongs to the eIF-6 family.</text>
</comment>